<keyword id="KW-0028">Amino-acid biosynthesis</keyword>
<keyword id="KW-0055">Arginine biosynthesis</keyword>
<keyword id="KW-0067">ATP-binding</keyword>
<keyword id="KW-0963">Cytoplasm</keyword>
<keyword id="KW-0418">Kinase</keyword>
<keyword id="KW-0547">Nucleotide-binding</keyword>
<keyword id="KW-1185">Reference proteome</keyword>
<keyword id="KW-0808">Transferase</keyword>
<proteinExistence type="inferred from homology"/>
<reference key="1">
    <citation type="submission" date="2008-05" db="EMBL/GenBank/DDBJ databases">
        <title>Complete sequence of chromosome of Geobacter lovleyi SZ.</title>
        <authorList>
            <consortium name="US DOE Joint Genome Institute"/>
            <person name="Lucas S."/>
            <person name="Copeland A."/>
            <person name="Lapidus A."/>
            <person name="Glavina del Rio T."/>
            <person name="Dalin E."/>
            <person name="Tice H."/>
            <person name="Bruce D."/>
            <person name="Goodwin L."/>
            <person name="Pitluck S."/>
            <person name="Chertkov O."/>
            <person name="Meincke L."/>
            <person name="Brettin T."/>
            <person name="Detter J.C."/>
            <person name="Han C."/>
            <person name="Tapia R."/>
            <person name="Kuske C.R."/>
            <person name="Schmutz J."/>
            <person name="Larimer F."/>
            <person name="Land M."/>
            <person name="Hauser L."/>
            <person name="Kyrpides N."/>
            <person name="Mikhailova N."/>
            <person name="Sung Y."/>
            <person name="Fletcher K.E."/>
            <person name="Ritalahti K.M."/>
            <person name="Loeffler F.E."/>
            <person name="Richardson P."/>
        </authorList>
    </citation>
    <scope>NUCLEOTIDE SEQUENCE [LARGE SCALE GENOMIC DNA]</scope>
    <source>
        <strain>ATCC BAA-1151 / DSM 17278 / SZ</strain>
    </source>
</reference>
<protein>
    <recommendedName>
        <fullName evidence="1">Acetylglutamate kinase</fullName>
        <ecNumber evidence="1">2.7.2.8</ecNumber>
    </recommendedName>
    <alternativeName>
        <fullName evidence="1">N-acetyl-L-glutamate 5-phosphotransferase</fullName>
    </alternativeName>
    <alternativeName>
        <fullName evidence="1">NAG kinase</fullName>
        <shortName evidence="1">NAGK</shortName>
    </alternativeName>
</protein>
<sequence>MKHLIDKANTLMEALPYIRRFSGRTFVIKYGGHAMSDERLKESFALDVIMLKSLGINAVIVHGGGPQINETLKRYGIVSEFVRGMRVTDGETMSVVEMVLVGQVNKEVVGYLNQHGGKAVGLCGKDGSLLLSKKLLQEVTGEDGAIEQIDIGYVGDVVKVNTDLIKTLEQGGYLPVIAPVGVGLAGESYNINADVVAGRVAAALNAEKLILLTDTPGVLDKDKQLIQKISVAQMHRLIEDESITGGMIPKVVCCAEALNDGVKKAHIIDGRMEHSVLLEIFTDVGIGTEITK</sequence>
<dbReference type="EC" id="2.7.2.8" evidence="1"/>
<dbReference type="EMBL" id="CP001089">
    <property type="protein sequence ID" value="ACD96858.1"/>
    <property type="molecule type" value="Genomic_DNA"/>
</dbReference>
<dbReference type="RefSeq" id="WP_012471182.1">
    <property type="nucleotide sequence ID" value="NC_010814.1"/>
</dbReference>
<dbReference type="SMR" id="B3E9Y3"/>
<dbReference type="STRING" id="398767.Glov_3152"/>
<dbReference type="KEGG" id="glo:Glov_3152"/>
<dbReference type="eggNOG" id="COG0548">
    <property type="taxonomic scope" value="Bacteria"/>
</dbReference>
<dbReference type="HOGENOM" id="CLU_053680_0_0_7"/>
<dbReference type="OrthoDB" id="9803155at2"/>
<dbReference type="UniPathway" id="UPA00068">
    <property type="reaction ID" value="UER00107"/>
</dbReference>
<dbReference type="Proteomes" id="UP000002420">
    <property type="component" value="Chromosome"/>
</dbReference>
<dbReference type="GO" id="GO:0005737">
    <property type="term" value="C:cytoplasm"/>
    <property type="evidence" value="ECO:0007669"/>
    <property type="project" value="UniProtKB-SubCell"/>
</dbReference>
<dbReference type="GO" id="GO:0003991">
    <property type="term" value="F:acetylglutamate kinase activity"/>
    <property type="evidence" value="ECO:0007669"/>
    <property type="project" value="UniProtKB-UniRule"/>
</dbReference>
<dbReference type="GO" id="GO:0005524">
    <property type="term" value="F:ATP binding"/>
    <property type="evidence" value="ECO:0007669"/>
    <property type="project" value="UniProtKB-UniRule"/>
</dbReference>
<dbReference type="GO" id="GO:0042450">
    <property type="term" value="P:arginine biosynthetic process via ornithine"/>
    <property type="evidence" value="ECO:0007669"/>
    <property type="project" value="UniProtKB-UniRule"/>
</dbReference>
<dbReference type="GO" id="GO:0006526">
    <property type="term" value="P:L-arginine biosynthetic process"/>
    <property type="evidence" value="ECO:0007669"/>
    <property type="project" value="UniProtKB-UniPathway"/>
</dbReference>
<dbReference type="CDD" id="cd04250">
    <property type="entry name" value="AAK_NAGK-C"/>
    <property type="match status" value="1"/>
</dbReference>
<dbReference type="FunFam" id="3.40.1160.10:FF:000004">
    <property type="entry name" value="Acetylglutamate kinase"/>
    <property type="match status" value="1"/>
</dbReference>
<dbReference type="Gene3D" id="3.40.1160.10">
    <property type="entry name" value="Acetylglutamate kinase-like"/>
    <property type="match status" value="1"/>
</dbReference>
<dbReference type="HAMAP" id="MF_00082">
    <property type="entry name" value="ArgB"/>
    <property type="match status" value="1"/>
</dbReference>
<dbReference type="InterPro" id="IPR036393">
    <property type="entry name" value="AceGlu_kinase-like_sf"/>
</dbReference>
<dbReference type="InterPro" id="IPR004662">
    <property type="entry name" value="AcgluKinase_fam"/>
</dbReference>
<dbReference type="InterPro" id="IPR037528">
    <property type="entry name" value="ArgB"/>
</dbReference>
<dbReference type="InterPro" id="IPR001048">
    <property type="entry name" value="Asp/Glu/Uridylate_kinase"/>
</dbReference>
<dbReference type="InterPro" id="IPR001057">
    <property type="entry name" value="Glu/AcGlu_kinase"/>
</dbReference>
<dbReference type="InterPro" id="IPR041727">
    <property type="entry name" value="NAGK-C"/>
</dbReference>
<dbReference type="NCBIfam" id="TIGR00761">
    <property type="entry name" value="argB"/>
    <property type="match status" value="1"/>
</dbReference>
<dbReference type="PANTHER" id="PTHR23342">
    <property type="entry name" value="N-ACETYLGLUTAMATE SYNTHASE"/>
    <property type="match status" value="1"/>
</dbReference>
<dbReference type="PANTHER" id="PTHR23342:SF0">
    <property type="entry name" value="N-ACETYLGLUTAMATE SYNTHASE, MITOCHONDRIAL"/>
    <property type="match status" value="1"/>
</dbReference>
<dbReference type="Pfam" id="PF00696">
    <property type="entry name" value="AA_kinase"/>
    <property type="match status" value="1"/>
</dbReference>
<dbReference type="PIRSF" id="PIRSF000728">
    <property type="entry name" value="NAGK"/>
    <property type="match status" value="1"/>
</dbReference>
<dbReference type="PRINTS" id="PR00474">
    <property type="entry name" value="GLU5KINASE"/>
</dbReference>
<dbReference type="SUPFAM" id="SSF53633">
    <property type="entry name" value="Carbamate kinase-like"/>
    <property type="match status" value="1"/>
</dbReference>
<feature type="chain" id="PRO_1000092860" description="Acetylglutamate kinase">
    <location>
        <begin position="1"/>
        <end position="292"/>
    </location>
</feature>
<feature type="binding site" evidence="1">
    <location>
        <begin position="64"/>
        <end position="65"/>
    </location>
    <ligand>
        <name>substrate</name>
    </ligand>
</feature>
<feature type="binding site" evidence="1">
    <location>
        <position position="86"/>
    </location>
    <ligand>
        <name>substrate</name>
    </ligand>
</feature>
<feature type="binding site" evidence="1">
    <location>
        <position position="190"/>
    </location>
    <ligand>
        <name>substrate</name>
    </ligand>
</feature>
<feature type="site" description="Transition state stabilizer" evidence="1">
    <location>
        <position position="29"/>
    </location>
</feature>
<feature type="site" description="Transition state stabilizer" evidence="1">
    <location>
        <position position="250"/>
    </location>
</feature>
<evidence type="ECO:0000255" key="1">
    <source>
        <dbReference type="HAMAP-Rule" id="MF_00082"/>
    </source>
</evidence>
<organism>
    <name type="scientific">Trichlorobacter lovleyi (strain ATCC BAA-1151 / DSM 17278 / SZ)</name>
    <name type="common">Geobacter lovleyi</name>
    <dbReference type="NCBI Taxonomy" id="398767"/>
    <lineage>
        <taxon>Bacteria</taxon>
        <taxon>Pseudomonadati</taxon>
        <taxon>Thermodesulfobacteriota</taxon>
        <taxon>Desulfuromonadia</taxon>
        <taxon>Geobacterales</taxon>
        <taxon>Geobacteraceae</taxon>
        <taxon>Trichlorobacter</taxon>
    </lineage>
</organism>
<comment type="function">
    <text evidence="1">Catalyzes the ATP-dependent phosphorylation of N-acetyl-L-glutamate.</text>
</comment>
<comment type="catalytic activity">
    <reaction evidence="1">
        <text>N-acetyl-L-glutamate + ATP = N-acetyl-L-glutamyl 5-phosphate + ADP</text>
        <dbReference type="Rhea" id="RHEA:14629"/>
        <dbReference type="ChEBI" id="CHEBI:30616"/>
        <dbReference type="ChEBI" id="CHEBI:44337"/>
        <dbReference type="ChEBI" id="CHEBI:57936"/>
        <dbReference type="ChEBI" id="CHEBI:456216"/>
        <dbReference type="EC" id="2.7.2.8"/>
    </reaction>
</comment>
<comment type="pathway">
    <text evidence="1">Amino-acid biosynthesis; L-arginine biosynthesis; N(2)-acetyl-L-ornithine from L-glutamate: step 2/4.</text>
</comment>
<comment type="subcellular location">
    <subcellularLocation>
        <location evidence="1">Cytoplasm</location>
    </subcellularLocation>
</comment>
<comment type="similarity">
    <text evidence="1">Belongs to the acetylglutamate kinase family. ArgB subfamily.</text>
</comment>
<gene>
    <name evidence="1" type="primary">argB</name>
    <name type="ordered locus">Glov_3152</name>
</gene>
<accession>B3E9Y3</accession>
<name>ARGB_TRIL1</name>